<accession>Q9KCN9</accession>
<protein>
    <recommendedName>
        <fullName evidence="1">Phosphopentomutase</fullName>
        <ecNumber evidence="1">5.4.2.7</ecNumber>
    </recommendedName>
    <alternativeName>
        <fullName evidence="1">Phosphodeoxyribomutase</fullName>
    </alternativeName>
</protein>
<reference key="1">
    <citation type="journal article" date="2000" name="Nucleic Acids Res.">
        <title>Complete genome sequence of the alkaliphilic bacterium Bacillus halodurans and genomic sequence comparison with Bacillus subtilis.</title>
        <authorList>
            <person name="Takami H."/>
            <person name="Nakasone K."/>
            <person name="Takaki Y."/>
            <person name="Maeno G."/>
            <person name="Sasaki R."/>
            <person name="Masui N."/>
            <person name="Fuji F."/>
            <person name="Hirama C."/>
            <person name="Nakamura Y."/>
            <person name="Ogasawara N."/>
            <person name="Kuhara S."/>
            <person name="Horikoshi K."/>
        </authorList>
    </citation>
    <scope>NUCLEOTIDE SEQUENCE [LARGE SCALE GENOMIC DNA]</scope>
    <source>
        <strain>ATCC BAA-125 / DSM 18197 / FERM 7344 / JCM 9153 / C-125</strain>
    </source>
</reference>
<proteinExistence type="inferred from homology"/>
<evidence type="ECO:0000255" key="1">
    <source>
        <dbReference type="HAMAP-Rule" id="MF_00740"/>
    </source>
</evidence>
<comment type="function">
    <text evidence="1">Isomerase that catalyzes the conversion of deoxy-ribose 1-phosphate (dRib-1-P) and ribose 1-phosphate (Rib-1-P) to deoxy-ribose 5-phosphate (dRib-5-P) and ribose 5-phosphate (Rib-5-P), respectively.</text>
</comment>
<comment type="catalytic activity">
    <reaction evidence="1">
        <text>2-deoxy-alpha-D-ribose 1-phosphate = 2-deoxy-D-ribose 5-phosphate</text>
        <dbReference type="Rhea" id="RHEA:27658"/>
        <dbReference type="ChEBI" id="CHEBI:57259"/>
        <dbReference type="ChEBI" id="CHEBI:62877"/>
        <dbReference type="EC" id="5.4.2.7"/>
    </reaction>
</comment>
<comment type="catalytic activity">
    <reaction evidence="1">
        <text>alpha-D-ribose 1-phosphate = D-ribose 5-phosphate</text>
        <dbReference type="Rhea" id="RHEA:18793"/>
        <dbReference type="ChEBI" id="CHEBI:57720"/>
        <dbReference type="ChEBI" id="CHEBI:78346"/>
        <dbReference type="EC" id="5.4.2.7"/>
    </reaction>
</comment>
<comment type="cofactor">
    <cofactor evidence="1">
        <name>Mn(2+)</name>
        <dbReference type="ChEBI" id="CHEBI:29035"/>
    </cofactor>
    <text evidence="1">Binds 2 manganese ions.</text>
</comment>
<comment type="pathway">
    <text evidence="1">Carbohydrate degradation; 2-deoxy-D-ribose 1-phosphate degradation; D-glyceraldehyde 3-phosphate and acetaldehyde from 2-deoxy-alpha-D-ribose 1-phosphate: step 1/2.</text>
</comment>
<comment type="subcellular location">
    <subcellularLocation>
        <location evidence="1">Cytoplasm</location>
    </subcellularLocation>
</comment>
<comment type="similarity">
    <text evidence="1">Belongs to the phosphopentomutase family.</text>
</comment>
<gene>
    <name evidence="1" type="primary">deoB</name>
    <name type="synonym">drm</name>
    <name type="ordered locus">BH1530</name>
</gene>
<sequence>MDVKRFKRVFLIVMDSVGIGEAPDAKAFGDQGAHTLGHIAERMNGLHMPNMAALGLSHIRPIQGIEKVDKPKAHYGIMQEISSGKDTMTGHWEIMGLHIREPFRVFPNGFPEELLNEIRELTGREILGNKVASGTEIIKELGDEHVKTGALIVYTSADSVLQIAAHEEVVPLEELYDICKKVRALTLDPKYMVGRIIARPFIGADGNWERTSNRHDYALKPFGRTVMNELKDAGFDSIAIGKISDIYDGEGVTESIRTISNDDGMEKLVRSMDQSFTGLSFINLVDFDAKYGHRRDPIGYGQALEQFDQQLADVVEKIGEEDVLIITADHGNDPVHHGTDHTREFVPLLVYTRGIKEGKDLGLRKTFADVGATIADNFQVEAPSIGTSFLHEL</sequence>
<name>DEOB_HALH5</name>
<organism>
    <name type="scientific">Halalkalibacterium halodurans (strain ATCC BAA-125 / DSM 18197 / FERM 7344 / JCM 9153 / C-125)</name>
    <name type="common">Bacillus halodurans</name>
    <dbReference type="NCBI Taxonomy" id="272558"/>
    <lineage>
        <taxon>Bacteria</taxon>
        <taxon>Bacillati</taxon>
        <taxon>Bacillota</taxon>
        <taxon>Bacilli</taxon>
        <taxon>Bacillales</taxon>
        <taxon>Bacillaceae</taxon>
        <taxon>Halalkalibacterium (ex Joshi et al. 2022)</taxon>
    </lineage>
</organism>
<keyword id="KW-0963">Cytoplasm</keyword>
<keyword id="KW-0413">Isomerase</keyword>
<keyword id="KW-0464">Manganese</keyword>
<keyword id="KW-0479">Metal-binding</keyword>
<keyword id="KW-1185">Reference proteome</keyword>
<dbReference type="EC" id="5.4.2.7" evidence="1"/>
<dbReference type="EMBL" id="BA000004">
    <property type="protein sequence ID" value="BAB05249.1"/>
    <property type="molecule type" value="Genomic_DNA"/>
</dbReference>
<dbReference type="PIR" id="B83841">
    <property type="entry name" value="B83841"/>
</dbReference>
<dbReference type="RefSeq" id="WP_010897695.1">
    <property type="nucleotide sequence ID" value="NC_002570.2"/>
</dbReference>
<dbReference type="SMR" id="Q9KCN9"/>
<dbReference type="STRING" id="272558.gene:10727428"/>
<dbReference type="DNASU" id="890958"/>
<dbReference type="GeneID" id="87597153"/>
<dbReference type="KEGG" id="bha:BH1530"/>
<dbReference type="eggNOG" id="COG1015">
    <property type="taxonomic scope" value="Bacteria"/>
</dbReference>
<dbReference type="HOGENOM" id="CLU_053861_0_0_9"/>
<dbReference type="OrthoDB" id="9769930at2"/>
<dbReference type="UniPathway" id="UPA00002">
    <property type="reaction ID" value="UER00467"/>
</dbReference>
<dbReference type="Proteomes" id="UP000001258">
    <property type="component" value="Chromosome"/>
</dbReference>
<dbReference type="GO" id="GO:0005829">
    <property type="term" value="C:cytosol"/>
    <property type="evidence" value="ECO:0007669"/>
    <property type="project" value="TreeGrafter"/>
</dbReference>
<dbReference type="GO" id="GO:0000287">
    <property type="term" value="F:magnesium ion binding"/>
    <property type="evidence" value="ECO:0007669"/>
    <property type="project" value="InterPro"/>
</dbReference>
<dbReference type="GO" id="GO:0030145">
    <property type="term" value="F:manganese ion binding"/>
    <property type="evidence" value="ECO:0007669"/>
    <property type="project" value="UniProtKB-UniRule"/>
</dbReference>
<dbReference type="GO" id="GO:0008973">
    <property type="term" value="F:phosphopentomutase activity"/>
    <property type="evidence" value="ECO:0007669"/>
    <property type="project" value="UniProtKB-UniRule"/>
</dbReference>
<dbReference type="GO" id="GO:0006018">
    <property type="term" value="P:2-deoxyribose 1-phosphate catabolic process"/>
    <property type="evidence" value="ECO:0007669"/>
    <property type="project" value="UniProtKB-UniRule"/>
</dbReference>
<dbReference type="GO" id="GO:0006015">
    <property type="term" value="P:5-phosphoribose 1-diphosphate biosynthetic process"/>
    <property type="evidence" value="ECO:0007669"/>
    <property type="project" value="UniProtKB-UniPathway"/>
</dbReference>
<dbReference type="GO" id="GO:0043094">
    <property type="term" value="P:metabolic compound salvage"/>
    <property type="evidence" value="ECO:0007669"/>
    <property type="project" value="InterPro"/>
</dbReference>
<dbReference type="GO" id="GO:0009117">
    <property type="term" value="P:nucleotide metabolic process"/>
    <property type="evidence" value="ECO:0007669"/>
    <property type="project" value="InterPro"/>
</dbReference>
<dbReference type="CDD" id="cd16009">
    <property type="entry name" value="PPM"/>
    <property type="match status" value="1"/>
</dbReference>
<dbReference type="FunFam" id="3.30.70.1250:FF:000001">
    <property type="entry name" value="Phosphopentomutase"/>
    <property type="match status" value="1"/>
</dbReference>
<dbReference type="Gene3D" id="3.40.720.10">
    <property type="entry name" value="Alkaline Phosphatase, subunit A"/>
    <property type="match status" value="1"/>
</dbReference>
<dbReference type="Gene3D" id="3.30.70.1250">
    <property type="entry name" value="Phosphopentomutase"/>
    <property type="match status" value="1"/>
</dbReference>
<dbReference type="HAMAP" id="MF_00740">
    <property type="entry name" value="Phosphopentomut"/>
    <property type="match status" value="1"/>
</dbReference>
<dbReference type="InterPro" id="IPR017850">
    <property type="entry name" value="Alkaline_phosphatase_core_sf"/>
</dbReference>
<dbReference type="InterPro" id="IPR010045">
    <property type="entry name" value="DeoB"/>
</dbReference>
<dbReference type="InterPro" id="IPR006124">
    <property type="entry name" value="Metalloenzyme"/>
</dbReference>
<dbReference type="InterPro" id="IPR024052">
    <property type="entry name" value="Phosphopentomutase_DeoB_cap_sf"/>
</dbReference>
<dbReference type="NCBIfam" id="TIGR01696">
    <property type="entry name" value="deoB"/>
    <property type="match status" value="1"/>
</dbReference>
<dbReference type="NCBIfam" id="NF003766">
    <property type="entry name" value="PRK05362.1"/>
    <property type="match status" value="1"/>
</dbReference>
<dbReference type="PANTHER" id="PTHR21110">
    <property type="entry name" value="PHOSPHOPENTOMUTASE"/>
    <property type="match status" value="1"/>
</dbReference>
<dbReference type="PANTHER" id="PTHR21110:SF0">
    <property type="entry name" value="PHOSPHOPENTOMUTASE"/>
    <property type="match status" value="1"/>
</dbReference>
<dbReference type="Pfam" id="PF01676">
    <property type="entry name" value="Metalloenzyme"/>
    <property type="match status" value="1"/>
</dbReference>
<dbReference type="PIRSF" id="PIRSF001491">
    <property type="entry name" value="Ppentomutase"/>
    <property type="match status" value="1"/>
</dbReference>
<dbReference type="SUPFAM" id="SSF53649">
    <property type="entry name" value="Alkaline phosphatase-like"/>
    <property type="match status" value="1"/>
</dbReference>
<dbReference type="SUPFAM" id="SSF143856">
    <property type="entry name" value="DeoB insert domain-like"/>
    <property type="match status" value="1"/>
</dbReference>
<feature type="chain" id="PRO_0000199808" description="Phosphopentomutase">
    <location>
        <begin position="1"/>
        <end position="393"/>
    </location>
</feature>
<feature type="binding site" evidence="1">
    <location>
        <position position="15"/>
    </location>
    <ligand>
        <name>Mn(2+)</name>
        <dbReference type="ChEBI" id="CHEBI:29035"/>
        <label>1</label>
    </ligand>
</feature>
<feature type="binding site" evidence="1">
    <location>
        <position position="288"/>
    </location>
    <ligand>
        <name>Mn(2+)</name>
        <dbReference type="ChEBI" id="CHEBI:29035"/>
        <label>2</label>
    </ligand>
</feature>
<feature type="binding site" evidence="1">
    <location>
        <position position="293"/>
    </location>
    <ligand>
        <name>Mn(2+)</name>
        <dbReference type="ChEBI" id="CHEBI:29035"/>
        <label>2</label>
    </ligand>
</feature>
<feature type="binding site" evidence="1">
    <location>
        <position position="329"/>
    </location>
    <ligand>
        <name>Mn(2+)</name>
        <dbReference type="ChEBI" id="CHEBI:29035"/>
        <label>1</label>
    </ligand>
</feature>
<feature type="binding site" evidence="1">
    <location>
        <position position="330"/>
    </location>
    <ligand>
        <name>Mn(2+)</name>
        <dbReference type="ChEBI" id="CHEBI:29035"/>
        <label>1</label>
    </ligand>
</feature>
<feature type="binding site" evidence="1">
    <location>
        <position position="341"/>
    </location>
    <ligand>
        <name>Mn(2+)</name>
        <dbReference type="ChEBI" id="CHEBI:29035"/>
        <label>2</label>
    </ligand>
</feature>